<protein>
    <recommendedName>
        <fullName>E3 ubiquitin-protein ligase LubX</fullName>
        <ecNumber>2.3.2.27</ecNumber>
    </recommendedName>
    <alternativeName>
        <fullName>Legionella U-box protein</fullName>
    </alternativeName>
    <alternativeName>
        <fullName evidence="3">RING-type E3 ubiquitin transferase LubX</fullName>
    </alternativeName>
</protein>
<reference key="1">
    <citation type="journal article" date="2004" name="Nat. Genet.">
        <title>Evidence in the Legionella pneumophila genome for exploitation of host cell functions and high genome plasticity.</title>
        <authorList>
            <person name="Cazalet C."/>
            <person name="Rusniok C."/>
            <person name="Brueggemann H."/>
            <person name="Zidane N."/>
            <person name="Magnier A."/>
            <person name="Ma L."/>
            <person name="Tichit M."/>
            <person name="Jarraud S."/>
            <person name="Bouchier C."/>
            <person name="Vandenesch F."/>
            <person name="Kunst F."/>
            <person name="Etienne J."/>
            <person name="Glaser P."/>
            <person name="Buchrieser C."/>
        </authorList>
    </citation>
    <scope>NUCLEOTIDE SEQUENCE [LARGE SCALE GENOMIC DNA]</scope>
    <source>
        <strain>Paris</strain>
    </source>
</reference>
<dbReference type="EC" id="2.3.2.27"/>
<dbReference type="EMBL" id="CR628336">
    <property type="protein sequence ID" value="CAH14040.1"/>
    <property type="molecule type" value="Genomic_DNA"/>
</dbReference>
<dbReference type="PDB" id="4WZ0">
    <property type="method" value="X-ray"/>
    <property type="resolution" value="1.95 A"/>
    <property type="chains" value="A=17-117"/>
</dbReference>
<dbReference type="PDB" id="4WZ2">
    <property type="method" value="X-ray"/>
    <property type="resolution" value="3.41 A"/>
    <property type="chains" value="A/B/C=102-202"/>
</dbReference>
<dbReference type="PDB" id="4WZ3">
    <property type="method" value="X-ray"/>
    <property type="resolution" value="2.70 A"/>
    <property type="chains" value="B=1-215"/>
</dbReference>
<dbReference type="PDB" id="4XI1">
    <property type="method" value="X-ray"/>
    <property type="resolution" value="2.98 A"/>
    <property type="chains" value="A/B/C=102-202"/>
</dbReference>
<dbReference type="PDBsum" id="4WZ0"/>
<dbReference type="PDBsum" id="4WZ2"/>
<dbReference type="PDBsum" id="4WZ3"/>
<dbReference type="PDBsum" id="4XI1"/>
<dbReference type="SMR" id="Q5X159"/>
<dbReference type="DIP" id="DIP-61711N"/>
<dbReference type="IntAct" id="Q5X159">
    <property type="interactions" value="1"/>
</dbReference>
<dbReference type="KEGG" id="lpp:lpp2887"/>
<dbReference type="LegioList" id="lpp2887"/>
<dbReference type="HOGENOM" id="CLU_1127976_0_0_6"/>
<dbReference type="EvolutionaryTrace" id="Q5X159"/>
<dbReference type="GO" id="GO:0005737">
    <property type="term" value="C:cytoplasm"/>
    <property type="evidence" value="ECO:0007669"/>
    <property type="project" value="TreeGrafter"/>
</dbReference>
<dbReference type="GO" id="GO:0005576">
    <property type="term" value="C:extracellular region"/>
    <property type="evidence" value="ECO:0000250"/>
    <property type="project" value="UniProtKB"/>
</dbReference>
<dbReference type="GO" id="GO:0043657">
    <property type="term" value="C:host cell"/>
    <property type="evidence" value="ECO:0000250"/>
    <property type="project" value="UniProtKB"/>
</dbReference>
<dbReference type="GO" id="GO:0051087">
    <property type="term" value="F:protein-folding chaperone binding"/>
    <property type="evidence" value="ECO:0007669"/>
    <property type="project" value="TreeGrafter"/>
</dbReference>
<dbReference type="GO" id="GO:0061630">
    <property type="term" value="F:ubiquitin protein ligase activity"/>
    <property type="evidence" value="ECO:0007669"/>
    <property type="project" value="TreeGrafter"/>
</dbReference>
<dbReference type="GO" id="GO:0004842">
    <property type="term" value="F:ubiquitin-protein transferase activity"/>
    <property type="evidence" value="ECO:0000250"/>
    <property type="project" value="UniProtKB"/>
</dbReference>
<dbReference type="GO" id="GO:0071218">
    <property type="term" value="P:cellular response to misfolded protein"/>
    <property type="evidence" value="ECO:0007669"/>
    <property type="project" value="TreeGrafter"/>
</dbReference>
<dbReference type="GO" id="GO:0045862">
    <property type="term" value="P:positive regulation of proteolysis"/>
    <property type="evidence" value="ECO:0007669"/>
    <property type="project" value="TreeGrafter"/>
</dbReference>
<dbReference type="GO" id="GO:0043161">
    <property type="term" value="P:proteasome-mediated ubiquitin-dependent protein catabolic process"/>
    <property type="evidence" value="ECO:0007669"/>
    <property type="project" value="TreeGrafter"/>
</dbReference>
<dbReference type="GO" id="GO:0000209">
    <property type="term" value="P:protein polyubiquitination"/>
    <property type="evidence" value="ECO:0007669"/>
    <property type="project" value="TreeGrafter"/>
</dbReference>
<dbReference type="GO" id="GO:0006515">
    <property type="term" value="P:protein quality control for misfolded or incompletely synthesized proteins"/>
    <property type="evidence" value="ECO:0007669"/>
    <property type="project" value="TreeGrafter"/>
</dbReference>
<dbReference type="GO" id="GO:0016567">
    <property type="term" value="P:protein ubiquitination"/>
    <property type="evidence" value="ECO:0000250"/>
    <property type="project" value="UniProtKB"/>
</dbReference>
<dbReference type="CDD" id="cd16453">
    <property type="entry name" value="RING-Ubox"/>
    <property type="match status" value="1"/>
</dbReference>
<dbReference type="CDD" id="cd23149">
    <property type="entry name" value="RING-Ubox_LubX-like_rpt1"/>
    <property type="match status" value="1"/>
</dbReference>
<dbReference type="Gene3D" id="3.30.40.10">
    <property type="entry name" value="Zinc/RING finger domain, C3HC4 (zinc finger)"/>
    <property type="match status" value="2"/>
</dbReference>
<dbReference type="InterPro" id="IPR003613">
    <property type="entry name" value="Ubox_domain"/>
</dbReference>
<dbReference type="InterPro" id="IPR013083">
    <property type="entry name" value="Znf_RING/FYVE/PHD"/>
</dbReference>
<dbReference type="PANTHER" id="PTHR46803">
    <property type="entry name" value="E3 UBIQUITIN-PROTEIN LIGASE CHIP"/>
    <property type="match status" value="1"/>
</dbReference>
<dbReference type="PANTHER" id="PTHR46803:SF2">
    <property type="entry name" value="E3 UBIQUITIN-PROTEIN LIGASE CHIP"/>
    <property type="match status" value="1"/>
</dbReference>
<dbReference type="Pfam" id="PF04564">
    <property type="entry name" value="U-box"/>
    <property type="match status" value="2"/>
</dbReference>
<dbReference type="SMART" id="SM00504">
    <property type="entry name" value="Ubox"/>
    <property type="match status" value="2"/>
</dbReference>
<dbReference type="SUPFAM" id="SSF57850">
    <property type="entry name" value="RING/U-box"/>
    <property type="match status" value="2"/>
</dbReference>
<dbReference type="PROSITE" id="PS51698">
    <property type="entry name" value="U_BOX"/>
    <property type="match status" value="2"/>
</dbReference>
<gene>
    <name type="primary">lubX</name>
    <name type="ordered locus">lpp2887</name>
</gene>
<sequence length="240" mass="27657">MATRNPFDIDHKSKYLREAALEANLSHPETTPTMLTCPIDSGFLKDPVITPEGFVYNKSSILKWLETKKEDPQSRKPLTAKDLQPFPELLIIVNRFVETQTNYEKLKNRLVQNARVAARQKEYTEIPDIFLCPISKTLIKTPVITAQGKVYDQEALSNFLIATGNKDETGKKLSIDDVVVFDELYQQIKVYNFYRKREVQKNQIQPSVSNGFGFFSLNFLTSWLWGTEEKKEKTSSDMTY</sequence>
<keyword id="KW-0002">3D-structure</keyword>
<keyword id="KW-0677">Repeat</keyword>
<keyword id="KW-0964">Secreted</keyword>
<keyword id="KW-0808">Transferase</keyword>
<keyword id="KW-0832">Ubl conjugation</keyword>
<keyword id="KW-0833">Ubl conjugation pathway</keyword>
<keyword id="KW-0843">Virulence</keyword>
<comment type="function">
    <text evidence="2">Effector proteins function to alter host cell physiology and promote bacterial survival in host tissues. This protein is an E3 ubiquitin ligase that interferes with host's ubiquitination pathway.</text>
</comment>
<comment type="catalytic activity">
    <reaction>
        <text>S-ubiquitinyl-[E2 ubiquitin-conjugating enzyme]-L-cysteine + [acceptor protein]-L-lysine = [E2 ubiquitin-conjugating enzyme]-L-cysteine + N(6)-ubiquitinyl-[acceptor protein]-L-lysine.</text>
        <dbReference type="EC" id="2.3.2.27"/>
    </reaction>
</comment>
<comment type="subcellular location">
    <subcellularLocation>
        <location evidence="1">Secreted</location>
    </subcellularLocation>
    <subcellularLocation>
        <location evidence="1">Host cell</location>
    </subcellularLocation>
    <text evidence="1">Secreted via type IV secretion system (T4SS), and delivered into the host cell.</text>
</comment>
<comment type="domain">
    <text evidence="1">U-box 1 is critical to the ubiquitin ligase activity, and U-box 2 mediates interaction with host target.</text>
</comment>
<comment type="domain">
    <text evidence="1">The 25 C-terminal region may carry the signal responsible for translocation into the host cell.</text>
</comment>
<comment type="PTM">
    <text evidence="1">Ubiquitinated in the presence of host E1 ubiquitin-activating enzyme, E2 ubiquitin-conjugating enzyme and ubiquitin.</text>
</comment>
<proteinExistence type="evidence at protein level"/>
<accession>Q5X159</accession>
<organism>
    <name type="scientific">Legionella pneumophila (strain Paris)</name>
    <dbReference type="NCBI Taxonomy" id="297246"/>
    <lineage>
        <taxon>Bacteria</taxon>
        <taxon>Pseudomonadati</taxon>
        <taxon>Pseudomonadota</taxon>
        <taxon>Gammaproteobacteria</taxon>
        <taxon>Legionellales</taxon>
        <taxon>Legionellaceae</taxon>
        <taxon>Legionella</taxon>
    </lineage>
</organism>
<evidence type="ECO:0000250" key="1"/>
<evidence type="ECO:0000250" key="2">
    <source>
        <dbReference type="UniProtKB" id="Q5ZRQ0"/>
    </source>
</evidence>
<evidence type="ECO:0000305" key="3"/>
<evidence type="ECO:0007829" key="4">
    <source>
        <dbReference type="PDB" id="4WZ0"/>
    </source>
</evidence>
<evidence type="ECO:0007829" key="5">
    <source>
        <dbReference type="PDB" id="4WZ3"/>
    </source>
</evidence>
<evidence type="ECO:0007829" key="6">
    <source>
        <dbReference type="PDB" id="4XI1"/>
    </source>
</evidence>
<name>LUBX_LEGPA</name>
<feature type="chain" id="PRO_0000395864" description="E3 ubiquitin-protein ligase LubX">
    <location>
        <begin position="1"/>
        <end position="240"/>
    </location>
</feature>
<feature type="domain" description="U-box 1">
    <location>
        <begin position="30"/>
        <end position="103"/>
    </location>
</feature>
<feature type="domain" description="U-box 2">
    <location>
        <begin position="125"/>
        <end position="198"/>
    </location>
</feature>
<feature type="helix" evidence="4">
    <location>
        <begin position="17"/>
        <end position="25"/>
    </location>
</feature>
<feature type="helix" evidence="4">
    <location>
        <begin position="33"/>
        <end position="35"/>
    </location>
</feature>
<feature type="turn" evidence="4">
    <location>
        <begin position="38"/>
        <end position="40"/>
    </location>
</feature>
<feature type="strand" evidence="4">
    <location>
        <begin position="45"/>
        <end position="49"/>
    </location>
</feature>
<feature type="strand" evidence="4">
    <location>
        <begin position="55"/>
        <end position="57"/>
    </location>
</feature>
<feature type="helix" evidence="4">
    <location>
        <begin position="58"/>
        <end position="67"/>
    </location>
</feature>
<feature type="turn" evidence="4">
    <location>
        <begin position="72"/>
        <end position="74"/>
    </location>
</feature>
<feature type="helix" evidence="4">
    <location>
        <begin position="80"/>
        <end position="82"/>
    </location>
</feature>
<feature type="helix" evidence="4">
    <location>
        <begin position="89"/>
        <end position="116"/>
    </location>
</feature>
<feature type="helix" evidence="5">
    <location>
        <begin position="128"/>
        <end position="130"/>
    </location>
</feature>
<feature type="turn" evidence="5">
    <location>
        <begin position="133"/>
        <end position="135"/>
    </location>
</feature>
<feature type="strand" evidence="5">
    <location>
        <begin position="140"/>
        <end position="144"/>
    </location>
</feature>
<feature type="strand" evidence="5">
    <location>
        <begin position="146"/>
        <end position="148"/>
    </location>
</feature>
<feature type="strand" evidence="5">
    <location>
        <begin position="150"/>
        <end position="152"/>
    </location>
</feature>
<feature type="helix" evidence="5">
    <location>
        <begin position="153"/>
        <end position="162"/>
    </location>
</feature>
<feature type="strand" evidence="5">
    <location>
        <begin position="165"/>
        <end position="167"/>
    </location>
</feature>
<feature type="turn" evidence="5">
    <location>
        <begin position="168"/>
        <end position="170"/>
    </location>
</feature>
<feature type="helix" evidence="6">
    <location>
        <begin position="175"/>
        <end position="177"/>
    </location>
</feature>
<feature type="helix" evidence="5">
    <location>
        <begin position="182"/>
        <end position="184"/>
    </location>
</feature>